<evidence type="ECO:0000250" key="1">
    <source>
        <dbReference type="UniProtKB" id="Q9ZHS1"/>
    </source>
</evidence>
<evidence type="ECO:0000255" key="2">
    <source>
        <dbReference type="PROSITE-ProRule" id="PRU00169"/>
    </source>
</evidence>
<evidence type="ECO:0000255" key="3">
    <source>
        <dbReference type="PROSITE-ProRule" id="PRU01091"/>
    </source>
</evidence>
<evidence type="ECO:0000269" key="4">
    <source>
    </source>
</evidence>
<evidence type="ECO:0000303" key="5">
    <source>
    </source>
</evidence>
<evidence type="ECO:0000305" key="6">
    <source>
    </source>
</evidence>
<evidence type="ECO:0000305" key="7">
    <source>
    </source>
</evidence>
<evidence type="ECO:0007829" key="8">
    <source>
        <dbReference type="PDB" id="4QPJ"/>
    </source>
</evidence>
<proteinExistence type="evidence at protein level"/>
<organism>
    <name type="scientific">Brucella abortus (strain 2308)</name>
    <dbReference type="NCBI Taxonomy" id="359391"/>
    <lineage>
        <taxon>Bacteria</taxon>
        <taxon>Pseudomonadati</taxon>
        <taxon>Pseudomonadota</taxon>
        <taxon>Alphaproteobacteria</taxon>
        <taxon>Hyphomicrobiales</taxon>
        <taxon>Brucellaceae</taxon>
        <taxon>Brucella/Ochrobactrum group</taxon>
        <taxon>Brucella</taxon>
    </lineage>
</organism>
<protein>
    <recommendedName>
        <fullName>Cell cycle response regulator CtrA</fullName>
    </recommendedName>
    <alternativeName>
        <fullName>Cell cycle transcriptional regulator A</fullName>
    </alternativeName>
</protein>
<comment type="function">
    <text evidence="1 4 6">Component of a regulatory phosphorelay system that controls B.abortus cell growth, division, and intracellular survival inside mammalian host cells. This signaling pathway is composed of CckA, ChpT, CtrA and CpdR. CtrA is a response regulator substrate of ChpT (PubMed:26124143). When phosphorylated, directly regulates the expression of ccrM (PubMed:10852881). Is also probably involved in the transcriptional regulation of rpoD, pleC, minC and ftsE genes (By similarity).</text>
</comment>
<comment type="subunit">
    <text evidence="4">Forms an asymmetric heterotetramer with ChpT (2:2). There are at least two modes of interaction between ChpT and CtrA, only one of which is competent to catalyze His-Asp phosphoryl transfer.</text>
</comment>
<comment type="subcellular location">
    <subcellularLocation>
        <location evidence="7">Cytoplasm</location>
    </subcellularLocation>
</comment>
<comment type="PTM">
    <text evidence="4">Is phosphorylated by ChpT-P, likely on Asp-51.</text>
</comment>
<comment type="disruption phenotype">
    <text evidence="4">This gene cannot be deleted or disrupted, indicating this gene is essential in B.abortus.</text>
</comment>
<sequence>MRVLLIEDDSAIAQSIELMLKSESFNVYTTDLGEEGIDLGKLYDYDIILLDLNLPDMSGYEVLRTLRLSKVKTPILILSGMAGIEDKVRGLGFGADDYMTKPFHKDELIARIHAIVRRSKGHAQSVITTGDLVVNLDAKTVEVAGQRVHLTGKEYQMLELLSLRKGTTLTKEMFLNHLYGGMDEPELKIIDVFICKLRKKLDAVSGNQSYIETVWGRGYVLREPDAEMRESA</sequence>
<accession>Q2YQA4</accession>
<feature type="chain" id="PRO_0000363196" description="Cell cycle response regulator CtrA">
    <location>
        <begin position="1"/>
        <end position="232"/>
    </location>
</feature>
<feature type="domain" description="Response regulatory" evidence="2">
    <location>
        <begin position="2"/>
        <end position="116"/>
    </location>
</feature>
<feature type="DNA-binding region" description="OmpR/PhoB-type" evidence="3">
    <location>
        <begin position="124"/>
        <end position="223"/>
    </location>
</feature>
<feature type="modified residue" description="4-aspartylphosphate" evidence="2 7">
    <location>
        <position position="51"/>
    </location>
</feature>
<feature type="mutagenesis site" description="90% reduction in phosphoryl transfer from CckA-P to CtrA via ChpT." evidence="4">
    <original>S</original>
    <variation>R</variation>
    <location>
        <position position="15"/>
    </location>
</feature>
<feature type="mutagenesis site" description="Temperature sensitive mutant that displays no growth defect at 30 degrees Celsius but fails to replicate when grown at 37 degrees Celsius. These mutant cells cultured at the nonpermissive temperature are abnormally elongated and show defects in cell divison by 24 hours, with apparent budding from the midcell position. Significant reduction in intracellular B.abortus replication and/or survival in human macrophages." evidence="4">
    <original>V</original>
    <variation>F</variation>
    <location>
        <position position="148"/>
    </location>
</feature>
<feature type="strand" evidence="8">
    <location>
        <begin position="2"/>
        <end position="6"/>
    </location>
</feature>
<feature type="helix" evidence="8">
    <location>
        <begin position="10"/>
        <end position="21"/>
    </location>
</feature>
<feature type="turn" evidence="8">
    <location>
        <begin position="22"/>
        <end position="24"/>
    </location>
</feature>
<feature type="strand" evidence="8">
    <location>
        <begin position="26"/>
        <end position="31"/>
    </location>
</feature>
<feature type="helix" evidence="8">
    <location>
        <begin position="33"/>
        <end position="42"/>
    </location>
</feature>
<feature type="strand" evidence="8">
    <location>
        <begin position="46"/>
        <end position="52"/>
    </location>
</feature>
<feature type="strand" evidence="8">
    <location>
        <begin position="55"/>
        <end position="57"/>
    </location>
</feature>
<feature type="helix" evidence="8">
    <location>
        <begin position="59"/>
        <end position="68"/>
    </location>
</feature>
<feature type="strand" evidence="8">
    <location>
        <begin position="75"/>
        <end position="81"/>
    </location>
</feature>
<feature type="helix" evidence="8">
    <location>
        <begin position="84"/>
        <end position="93"/>
    </location>
</feature>
<feature type="strand" evidence="8">
    <location>
        <begin position="96"/>
        <end position="102"/>
    </location>
</feature>
<feature type="helix" evidence="8">
    <location>
        <begin position="105"/>
        <end position="116"/>
    </location>
</feature>
<gene>
    <name evidence="5" type="primary">ctrA</name>
    <name type="ordered locus">BAB1_1614</name>
</gene>
<keyword id="KW-0002">3D-structure</keyword>
<keyword id="KW-0963">Cytoplasm</keyword>
<keyword id="KW-0238">DNA-binding</keyword>
<keyword id="KW-0597">Phosphoprotein</keyword>
<keyword id="KW-1185">Reference proteome</keyword>
<keyword id="KW-0804">Transcription</keyword>
<keyword id="KW-0805">Transcription regulation</keyword>
<keyword id="KW-0902">Two-component regulatory system</keyword>
<dbReference type="EMBL" id="AM040264">
    <property type="protein sequence ID" value="CAJ11570.1"/>
    <property type="molecule type" value="Genomic_DNA"/>
</dbReference>
<dbReference type="RefSeq" id="WP_002964699.1">
    <property type="nucleotide sequence ID" value="NZ_KN046823.1"/>
</dbReference>
<dbReference type="PDB" id="4QPJ">
    <property type="method" value="X-ray"/>
    <property type="resolution" value="2.74 A"/>
    <property type="chains" value="C/D=1-118"/>
</dbReference>
<dbReference type="PDBsum" id="4QPJ"/>
<dbReference type="SMR" id="Q2YQA4"/>
<dbReference type="STRING" id="359391.BAB1_1614"/>
<dbReference type="GeneID" id="97533230"/>
<dbReference type="KEGG" id="bmf:BAB1_1614"/>
<dbReference type="PATRIC" id="fig|359391.11.peg.1064"/>
<dbReference type="HOGENOM" id="CLU_000445_30_1_5"/>
<dbReference type="PhylomeDB" id="Q2YQA4"/>
<dbReference type="EvolutionaryTrace" id="Q2YQA4"/>
<dbReference type="Proteomes" id="UP000002719">
    <property type="component" value="Chromosome I"/>
</dbReference>
<dbReference type="GO" id="GO:0005829">
    <property type="term" value="C:cytosol"/>
    <property type="evidence" value="ECO:0007669"/>
    <property type="project" value="TreeGrafter"/>
</dbReference>
<dbReference type="GO" id="GO:0032993">
    <property type="term" value="C:protein-DNA complex"/>
    <property type="evidence" value="ECO:0007669"/>
    <property type="project" value="TreeGrafter"/>
</dbReference>
<dbReference type="GO" id="GO:0000156">
    <property type="term" value="F:phosphorelay response regulator activity"/>
    <property type="evidence" value="ECO:0007669"/>
    <property type="project" value="TreeGrafter"/>
</dbReference>
<dbReference type="GO" id="GO:0000976">
    <property type="term" value="F:transcription cis-regulatory region binding"/>
    <property type="evidence" value="ECO:0007669"/>
    <property type="project" value="TreeGrafter"/>
</dbReference>
<dbReference type="GO" id="GO:0000160">
    <property type="term" value="P:phosphorelay signal transduction system"/>
    <property type="evidence" value="ECO:0000314"/>
    <property type="project" value="UniProtKB"/>
</dbReference>
<dbReference type="GO" id="GO:0006355">
    <property type="term" value="P:regulation of DNA-templated transcription"/>
    <property type="evidence" value="ECO:0007669"/>
    <property type="project" value="InterPro"/>
</dbReference>
<dbReference type="CDD" id="cd17616">
    <property type="entry name" value="REC_OmpR_CtrA"/>
    <property type="match status" value="1"/>
</dbReference>
<dbReference type="CDD" id="cd00383">
    <property type="entry name" value="trans_reg_C"/>
    <property type="match status" value="1"/>
</dbReference>
<dbReference type="FunFam" id="1.10.10.10:FF:000052">
    <property type="entry name" value="Cell cycle response regulator"/>
    <property type="match status" value="1"/>
</dbReference>
<dbReference type="FunFam" id="3.40.50.2300:FF:000011">
    <property type="entry name" value="Cell cycle response regulator CtrA"/>
    <property type="match status" value="1"/>
</dbReference>
<dbReference type="Gene3D" id="3.40.50.2300">
    <property type="match status" value="1"/>
</dbReference>
<dbReference type="Gene3D" id="6.10.250.690">
    <property type="match status" value="1"/>
</dbReference>
<dbReference type="Gene3D" id="1.10.10.10">
    <property type="entry name" value="Winged helix-like DNA-binding domain superfamily/Winged helix DNA-binding domain"/>
    <property type="match status" value="1"/>
</dbReference>
<dbReference type="InterPro" id="IPR011006">
    <property type="entry name" value="CheY-like_superfamily"/>
</dbReference>
<dbReference type="InterPro" id="IPR001867">
    <property type="entry name" value="OmpR/PhoB-type_DNA-bd"/>
</dbReference>
<dbReference type="InterPro" id="IPR001789">
    <property type="entry name" value="Sig_transdc_resp-reg_receiver"/>
</dbReference>
<dbReference type="InterPro" id="IPR039420">
    <property type="entry name" value="WalR-like"/>
</dbReference>
<dbReference type="InterPro" id="IPR036388">
    <property type="entry name" value="WH-like_DNA-bd_sf"/>
</dbReference>
<dbReference type="NCBIfam" id="NF045991">
    <property type="entry name" value="RespRegCtrARhodob"/>
    <property type="match status" value="1"/>
</dbReference>
<dbReference type="PANTHER" id="PTHR48111">
    <property type="entry name" value="REGULATOR OF RPOS"/>
    <property type="match status" value="1"/>
</dbReference>
<dbReference type="PANTHER" id="PTHR48111:SF22">
    <property type="entry name" value="REGULATOR OF RPOS"/>
    <property type="match status" value="1"/>
</dbReference>
<dbReference type="Pfam" id="PF00072">
    <property type="entry name" value="Response_reg"/>
    <property type="match status" value="1"/>
</dbReference>
<dbReference type="Pfam" id="PF00486">
    <property type="entry name" value="Trans_reg_C"/>
    <property type="match status" value="1"/>
</dbReference>
<dbReference type="SMART" id="SM00448">
    <property type="entry name" value="REC"/>
    <property type="match status" value="1"/>
</dbReference>
<dbReference type="SMART" id="SM00862">
    <property type="entry name" value="Trans_reg_C"/>
    <property type="match status" value="1"/>
</dbReference>
<dbReference type="SUPFAM" id="SSF52172">
    <property type="entry name" value="CheY-like"/>
    <property type="match status" value="1"/>
</dbReference>
<dbReference type="PROSITE" id="PS51755">
    <property type="entry name" value="OMPR_PHOB"/>
    <property type="match status" value="1"/>
</dbReference>
<dbReference type="PROSITE" id="PS50110">
    <property type="entry name" value="RESPONSE_REGULATORY"/>
    <property type="match status" value="1"/>
</dbReference>
<name>CTRA_BRUA2</name>
<reference key="1">
    <citation type="journal article" date="2005" name="Infect. Immun.">
        <title>Whole-genome analyses of speciation events in pathogenic Brucellae.</title>
        <authorList>
            <person name="Chain P.S."/>
            <person name="Comerci D.J."/>
            <person name="Tolmasky M.E."/>
            <person name="Larimer F.W."/>
            <person name="Malfatti S.A."/>
            <person name="Vergez L.M."/>
            <person name="Aguero F."/>
            <person name="Land M.L."/>
            <person name="Ugalde R.A."/>
            <person name="Garcia E."/>
        </authorList>
    </citation>
    <scope>NUCLEOTIDE SEQUENCE [LARGE SCALE GENOMIC DNA]</scope>
    <source>
        <strain>2308</strain>
    </source>
</reference>
<reference key="2">
    <citation type="journal article" date="2000" name="J. Bacteriol.">
        <title>The Brucella abortus CcrM DNA methyltransferase is essential for viability, and its overexpression attenuates intracellular replication in murine macrophages.</title>
        <authorList>
            <person name="Robertson G.T."/>
            <person name="Reisenauer A."/>
            <person name="Wright R."/>
            <person name="Jensen R.B."/>
            <person name="Jensen A."/>
            <person name="Shapiro L."/>
            <person name="Roop R.M. II"/>
        </authorList>
    </citation>
    <scope>TRANSCRIPTIONAL CONTROL OF CCRM</scope>
</reference>
<reference key="3">
    <citation type="journal article" date="2015" name="Proc. Natl. Acad. Sci. U.S.A.">
        <title>Structural asymmetry in a conserved signaling system that regulates division, replication, and virulence of an intracellular pathogen.</title>
        <authorList>
            <person name="Willett J.W."/>
            <person name="Herrou J."/>
            <person name="Briegel A."/>
            <person name="Rotskoff G."/>
            <person name="Crosson S."/>
        </authorList>
    </citation>
    <scope>X-RAY CRYSTALLOGRAPHY (2.74 ANGSTROMS) OF 1-118 IN COMPLEX WITH CHPT</scope>
    <scope>FUNCTION</scope>
    <scope>SUBCELLULAR LOCATION</scope>
    <scope>PHOSPHORYLATION AT ASP-51</scope>
    <scope>DISRUPTION PHENOTYPE</scope>
    <scope>INTERACTION WITH CHPT</scope>
    <scope>MUTAGENESIS OF SER-15 AND VAL-148</scope>
    <source>
        <strain>2308</strain>
    </source>
</reference>